<gene>
    <name evidence="1" type="primary">dapB</name>
    <name type="ordered locus">YPTB0622</name>
</gene>
<feature type="chain" id="PRO_0000228404" description="4-hydroxy-tetrahydrodipicolinate reductase">
    <location>
        <begin position="1"/>
        <end position="273"/>
    </location>
</feature>
<feature type="active site" description="Proton donor/acceptor" evidence="1">
    <location>
        <position position="159"/>
    </location>
</feature>
<feature type="active site" description="Proton donor" evidence="1">
    <location>
        <position position="163"/>
    </location>
</feature>
<feature type="binding site" evidence="1">
    <location>
        <begin position="12"/>
        <end position="17"/>
    </location>
    <ligand>
        <name>NAD(+)</name>
        <dbReference type="ChEBI" id="CHEBI:57540"/>
    </ligand>
</feature>
<feature type="binding site" evidence="1">
    <location>
        <position position="38"/>
    </location>
    <ligand>
        <name>NAD(+)</name>
        <dbReference type="ChEBI" id="CHEBI:57540"/>
    </ligand>
</feature>
<feature type="binding site" evidence="1">
    <location>
        <position position="39"/>
    </location>
    <ligand>
        <name>NADP(+)</name>
        <dbReference type="ChEBI" id="CHEBI:58349"/>
    </ligand>
</feature>
<feature type="binding site" evidence="1">
    <location>
        <begin position="102"/>
        <end position="104"/>
    </location>
    <ligand>
        <name>NAD(+)</name>
        <dbReference type="ChEBI" id="CHEBI:57540"/>
    </ligand>
</feature>
<feature type="binding site" evidence="1">
    <location>
        <begin position="126"/>
        <end position="129"/>
    </location>
    <ligand>
        <name>NAD(+)</name>
        <dbReference type="ChEBI" id="CHEBI:57540"/>
    </ligand>
</feature>
<feature type="binding site" evidence="1">
    <location>
        <position position="160"/>
    </location>
    <ligand>
        <name>(S)-2,3,4,5-tetrahydrodipicolinate</name>
        <dbReference type="ChEBI" id="CHEBI:16845"/>
    </ligand>
</feature>
<feature type="binding site" evidence="1">
    <location>
        <begin position="169"/>
        <end position="170"/>
    </location>
    <ligand>
        <name>(S)-2,3,4,5-tetrahydrodipicolinate</name>
        <dbReference type="ChEBI" id="CHEBI:16845"/>
    </ligand>
</feature>
<dbReference type="EC" id="1.17.1.8" evidence="1"/>
<dbReference type="EMBL" id="BX936398">
    <property type="protein sequence ID" value="CAH19862.1"/>
    <property type="molecule type" value="Genomic_DNA"/>
</dbReference>
<dbReference type="RefSeq" id="WP_002210504.1">
    <property type="nucleotide sequence ID" value="NZ_CP009712.1"/>
</dbReference>
<dbReference type="SMR" id="Q66ER9"/>
<dbReference type="GeneID" id="57974130"/>
<dbReference type="KEGG" id="ypo:BZ17_1934"/>
<dbReference type="KEGG" id="yps:YPTB0622"/>
<dbReference type="PATRIC" id="fig|273123.14.peg.2057"/>
<dbReference type="UniPathway" id="UPA00034">
    <property type="reaction ID" value="UER00018"/>
</dbReference>
<dbReference type="Proteomes" id="UP000001011">
    <property type="component" value="Chromosome"/>
</dbReference>
<dbReference type="GO" id="GO:0005829">
    <property type="term" value="C:cytosol"/>
    <property type="evidence" value="ECO:0007669"/>
    <property type="project" value="TreeGrafter"/>
</dbReference>
<dbReference type="GO" id="GO:0008839">
    <property type="term" value="F:4-hydroxy-tetrahydrodipicolinate reductase"/>
    <property type="evidence" value="ECO:0007669"/>
    <property type="project" value="UniProtKB-EC"/>
</dbReference>
<dbReference type="GO" id="GO:0051287">
    <property type="term" value="F:NAD binding"/>
    <property type="evidence" value="ECO:0007669"/>
    <property type="project" value="UniProtKB-UniRule"/>
</dbReference>
<dbReference type="GO" id="GO:0050661">
    <property type="term" value="F:NADP binding"/>
    <property type="evidence" value="ECO:0007669"/>
    <property type="project" value="UniProtKB-UniRule"/>
</dbReference>
<dbReference type="GO" id="GO:0016726">
    <property type="term" value="F:oxidoreductase activity, acting on CH or CH2 groups, NAD or NADP as acceptor"/>
    <property type="evidence" value="ECO:0007669"/>
    <property type="project" value="UniProtKB-UniRule"/>
</dbReference>
<dbReference type="GO" id="GO:0019877">
    <property type="term" value="P:diaminopimelate biosynthetic process"/>
    <property type="evidence" value="ECO:0007669"/>
    <property type="project" value="UniProtKB-UniRule"/>
</dbReference>
<dbReference type="GO" id="GO:0009089">
    <property type="term" value="P:lysine biosynthetic process via diaminopimelate"/>
    <property type="evidence" value="ECO:0007669"/>
    <property type="project" value="UniProtKB-UniRule"/>
</dbReference>
<dbReference type="CDD" id="cd02274">
    <property type="entry name" value="DHDPR_N"/>
    <property type="match status" value="1"/>
</dbReference>
<dbReference type="FunFam" id="3.30.360.10:FF:000004">
    <property type="entry name" value="4-hydroxy-tetrahydrodipicolinate reductase"/>
    <property type="match status" value="1"/>
</dbReference>
<dbReference type="FunFam" id="3.40.50.720:FF:000048">
    <property type="entry name" value="4-hydroxy-tetrahydrodipicolinate reductase"/>
    <property type="match status" value="1"/>
</dbReference>
<dbReference type="Gene3D" id="3.30.360.10">
    <property type="entry name" value="Dihydrodipicolinate Reductase, domain 2"/>
    <property type="match status" value="1"/>
</dbReference>
<dbReference type="Gene3D" id="3.40.50.720">
    <property type="entry name" value="NAD(P)-binding Rossmann-like Domain"/>
    <property type="match status" value="1"/>
</dbReference>
<dbReference type="HAMAP" id="MF_00102">
    <property type="entry name" value="DapB"/>
    <property type="match status" value="1"/>
</dbReference>
<dbReference type="InterPro" id="IPR022663">
    <property type="entry name" value="DapB_C"/>
</dbReference>
<dbReference type="InterPro" id="IPR000846">
    <property type="entry name" value="DapB_N"/>
</dbReference>
<dbReference type="InterPro" id="IPR022664">
    <property type="entry name" value="DapB_N_CS"/>
</dbReference>
<dbReference type="InterPro" id="IPR023940">
    <property type="entry name" value="DHDPR_bac"/>
</dbReference>
<dbReference type="InterPro" id="IPR036291">
    <property type="entry name" value="NAD(P)-bd_dom_sf"/>
</dbReference>
<dbReference type="NCBIfam" id="TIGR00036">
    <property type="entry name" value="dapB"/>
    <property type="match status" value="1"/>
</dbReference>
<dbReference type="PANTHER" id="PTHR20836:SF0">
    <property type="entry name" value="4-HYDROXY-TETRAHYDRODIPICOLINATE REDUCTASE 1, CHLOROPLASTIC-RELATED"/>
    <property type="match status" value="1"/>
</dbReference>
<dbReference type="PANTHER" id="PTHR20836">
    <property type="entry name" value="DIHYDRODIPICOLINATE REDUCTASE"/>
    <property type="match status" value="1"/>
</dbReference>
<dbReference type="Pfam" id="PF05173">
    <property type="entry name" value="DapB_C"/>
    <property type="match status" value="1"/>
</dbReference>
<dbReference type="Pfam" id="PF01113">
    <property type="entry name" value="DapB_N"/>
    <property type="match status" value="1"/>
</dbReference>
<dbReference type="PIRSF" id="PIRSF000161">
    <property type="entry name" value="DHPR"/>
    <property type="match status" value="1"/>
</dbReference>
<dbReference type="SUPFAM" id="SSF55347">
    <property type="entry name" value="Glyceraldehyde-3-phosphate dehydrogenase-like, C-terminal domain"/>
    <property type="match status" value="1"/>
</dbReference>
<dbReference type="SUPFAM" id="SSF51735">
    <property type="entry name" value="NAD(P)-binding Rossmann-fold domains"/>
    <property type="match status" value="1"/>
</dbReference>
<dbReference type="PROSITE" id="PS01298">
    <property type="entry name" value="DAPB"/>
    <property type="match status" value="1"/>
</dbReference>
<keyword id="KW-0028">Amino-acid biosynthesis</keyword>
<keyword id="KW-0963">Cytoplasm</keyword>
<keyword id="KW-0220">Diaminopimelate biosynthesis</keyword>
<keyword id="KW-0457">Lysine biosynthesis</keyword>
<keyword id="KW-0520">NAD</keyword>
<keyword id="KW-0521">NADP</keyword>
<keyword id="KW-0560">Oxidoreductase</keyword>
<accession>Q66ER9</accession>
<organism>
    <name type="scientific">Yersinia pseudotuberculosis serotype I (strain IP32953)</name>
    <dbReference type="NCBI Taxonomy" id="273123"/>
    <lineage>
        <taxon>Bacteria</taxon>
        <taxon>Pseudomonadati</taxon>
        <taxon>Pseudomonadota</taxon>
        <taxon>Gammaproteobacteria</taxon>
        <taxon>Enterobacterales</taxon>
        <taxon>Yersiniaceae</taxon>
        <taxon>Yersinia</taxon>
    </lineage>
</organism>
<reference key="1">
    <citation type="journal article" date="2004" name="Proc. Natl. Acad. Sci. U.S.A.">
        <title>Insights into the evolution of Yersinia pestis through whole-genome comparison with Yersinia pseudotuberculosis.</title>
        <authorList>
            <person name="Chain P.S.G."/>
            <person name="Carniel E."/>
            <person name="Larimer F.W."/>
            <person name="Lamerdin J."/>
            <person name="Stoutland P.O."/>
            <person name="Regala W.M."/>
            <person name="Georgescu A.M."/>
            <person name="Vergez L.M."/>
            <person name="Land M.L."/>
            <person name="Motin V.L."/>
            <person name="Brubaker R.R."/>
            <person name="Fowler J."/>
            <person name="Hinnebusch J."/>
            <person name="Marceau M."/>
            <person name="Medigue C."/>
            <person name="Simonet M."/>
            <person name="Chenal-Francisque V."/>
            <person name="Souza B."/>
            <person name="Dacheux D."/>
            <person name="Elliott J.M."/>
            <person name="Derbise A."/>
            <person name="Hauser L.J."/>
            <person name="Garcia E."/>
        </authorList>
    </citation>
    <scope>NUCLEOTIDE SEQUENCE [LARGE SCALE GENOMIC DNA]</scope>
    <source>
        <strain>IP32953</strain>
    </source>
</reference>
<sequence>MTDSTIRIAIVGAGGRMGRQLIQAVTQMEGVVLGAAIERKGSTLVGSDAGELAGVGLLNVIVGDDLSQLTDNFDVLIDFTRPEGTLEHLAICRQHRKAMVIGTTGFDEAGKAAISEAAADIGIVFAANFSVGVNVVLKLLEKAAKVMGDYTDIEIIEAHHRHKVDAPSGTALAMGEAIADAMGRSLKDCAVYSREGYTGERKPGTIGFATVRAGDIVGEHTAMFADIGERVEITHKATSRMTFAHGAVKSAIWLGKHDNGLFDMRDVLNLNEL</sequence>
<evidence type="ECO:0000255" key="1">
    <source>
        <dbReference type="HAMAP-Rule" id="MF_00102"/>
    </source>
</evidence>
<evidence type="ECO:0000305" key="2"/>
<protein>
    <recommendedName>
        <fullName evidence="1">4-hydroxy-tetrahydrodipicolinate reductase</fullName>
        <shortName evidence="1">HTPA reductase</shortName>
        <ecNumber evidence="1">1.17.1.8</ecNumber>
    </recommendedName>
</protein>
<proteinExistence type="inferred from homology"/>
<name>DAPB_YERPS</name>
<comment type="function">
    <text evidence="1">Catalyzes the conversion of 4-hydroxy-tetrahydrodipicolinate (HTPA) to tetrahydrodipicolinate.</text>
</comment>
<comment type="catalytic activity">
    <reaction evidence="1">
        <text>(S)-2,3,4,5-tetrahydrodipicolinate + NAD(+) + H2O = (2S,4S)-4-hydroxy-2,3,4,5-tetrahydrodipicolinate + NADH + H(+)</text>
        <dbReference type="Rhea" id="RHEA:35323"/>
        <dbReference type="ChEBI" id="CHEBI:15377"/>
        <dbReference type="ChEBI" id="CHEBI:15378"/>
        <dbReference type="ChEBI" id="CHEBI:16845"/>
        <dbReference type="ChEBI" id="CHEBI:57540"/>
        <dbReference type="ChEBI" id="CHEBI:57945"/>
        <dbReference type="ChEBI" id="CHEBI:67139"/>
        <dbReference type="EC" id="1.17.1.8"/>
    </reaction>
</comment>
<comment type="catalytic activity">
    <reaction evidence="1">
        <text>(S)-2,3,4,5-tetrahydrodipicolinate + NADP(+) + H2O = (2S,4S)-4-hydroxy-2,3,4,5-tetrahydrodipicolinate + NADPH + H(+)</text>
        <dbReference type="Rhea" id="RHEA:35331"/>
        <dbReference type="ChEBI" id="CHEBI:15377"/>
        <dbReference type="ChEBI" id="CHEBI:15378"/>
        <dbReference type="ChEBI" id="CHEBI:16845"/>
        <dbReference type="ChEBI" id="CHEBI:57783"/>
        <dbReference type="ChEBI" id="CHEBI:58349"/>
        <dbReference type="ChEBI" id="CHEBI:67139"/>
        <dbReference type="EC" id="1.17.1.8"/>
    </reaction>
</comment>
<comment type="pathway">
    <text evidence="1">Amino-acid biosynthesis; L-lysine biosynthesis via DAP pathway; (S)-tetrahydrodipicolinate from L-aspartate: step 4/4.</text>
</comment>
<comment type="subunit">
    <text evidence="1">Homotetramer.</text>
</comment>
<comment type="subcellular location">
    <subcellularLocation>
        <location evidence="1">Cytoplasm</location>
    </subcellularLocation>
</comment>
<comment type="similarity">
    <text evidence="1">Belongs to the DapB family.</text>
</comment>
<comment type="caution">
    <text evidence="2">Was originally thought to be a dihydrodipicolinate reductase (DHDPR), catalyzing the conversion of dihydrodipicolinate to tetrahydrodipicolinate. However, it was shown in E.coli that the substrate of the enzymatic reaction is not dihydrodipicolinate (DHDP) but in fact (2S,4S)-4-hydroxy-2,3,4,5-tetrahydrodipicolinic acid (HTPA), the product released by the DapA-catalyzed reaction.</text>
</comment>